<gene>
    <name type="primary">psenen</name>
    <name type="ORF">DDB_G0293484</name>
</gene>
<proteinExistence type="inferred from homology"/>
<protein>
    <recommendedName>
        <fullName>Probable gamma-secretase subunit PEN-2</fullName>
    </recommendedName>
</protein>
<organism>
    <name type="scientific">Dictyostelium discoideum</name>
    <name type="common">Social amoeba</name>
    <dbReference type="NCBI Taxonomy" id="44689"/>
    <lineage>
        <taxon>Eukaryota</taxon>
        <taxon>Amoebozoa</taxon>
        <taxon>Evosea</taxon>
        <taxon>Eumycetozoa</taxon>
        <taxon>Dictyostelia</taxon>
        <taxon>Dictyosteliales</taxon>
        <taxon>Dictyosteliaceae</taxon>
        <taxon>Dictyostelium</taxon>
    </lineage>
</organism>
<sequence>MLIPEDDKLDDEKMINIAKKLWFIGFFFLPWVWLINILYFIPYRNSLNDKVKWYLKFSLIGFLGYSTIFMGWMGIYLVNRNKWGAFGDDISITIPFG</sequence>
<comment type="function">
    <text evidence="1">Essential subunit of the gamma-secretase complex, an endoprotease complex that catalyzes the intramembrane cleavage of integral membrane proteins such as Notch receptors. The gamma-secretase complex plays a role in Notch and Wnt signaling cascades and regulation of downstream processes via its role in processing key regulatory proteins.</text>
</comment>
<comment type="subunit">
    <text evidence="1">The functional gamma-secretase complex is composed of at least four polypeptides: a presenilin homodimer, nicastrin, aph1 and psenen.</text>
</comment>
<comment type="subcellular location">
    <subcellularLocation>
        <location evidence="1">Endoplasmic reticulum membrane</location>
        <topology evidence="1">Multi-pass membrane protein</topology>
    </subcellularLocation>
    <subcellularLocation>
        <location evidence="1">Golgi apparatus</location>
        <location evidence="1">Golgi stack membrane</location>
        <topology evidence="1">Multi-pass membrane protein</topology>
    </subcellularLocation>
    <subcellularLocation>
        <location evidence="1">Cell membrane</location>
        <topology evidence="1">Multi-pass membrane protein</topology>
    </subcellularLocation>
    <subcellularLocation>
        <location evidence="1">Membrane</location>
        <topology evidence="1">Multi-pass membrane protein</topology>
    </subcellularLocation>
    <text evidence="1">Predominantly located in the endoplasmic reticulum and in the cis-Golgi.</text>
</comment>
<comment type="similarity">
    <text evidence="2">Belongs to the PEN-2 family.</text>
</comment>
<comment type="caution">
    <text evidence="2">3D-structure analysis of the human homolog indicates that the membrane topology differs from the predictions. Contrary to predictions, the N-terminus contains two short helices that dip into the membrane, but do not cross it. The C-terminus contains the single transmembrane helix. This gives rise to a topology where the N-terminus is cytoplasmic and the C-terminus is lumenal.</text>
</comment>
<accession>Q54BR1</accession>
<dbReference type="EMBL" id="AAFI02000213">
    <property type="protein sequence ID" value="EAL60704.1"/>
    <property type="molecule type" value="Genomic_DNA"/>
</dbReference>
<dbReference type="EMBL" id="C92437">
    <property type="status" value="NOT_ANNOTATED_CDS"/>
    <property type="molecule type" value="mRNA"/>
</dbReference>
<dbReference type="RefSeq" id="XP_629118.1">
    <property type="nucleotide sequence ID" value="XM_629116.1"/>
</dbReference>
<dbReference type="SMR" id="Q54BR1"/>
<dbReference type="FunCoup" id="Q54BR1">
    <property type="interactions" value="4"/>
</dbReference>
<dbReference type="STRING" id="44689.Q54BR1"/>
<dbReference type="PaxDb" id="44689-DDB0266398"/>
<dbReference type="EnsemblProtists" id="EAL60704">
    <property type="protein sequence ID" value="EAL60704"/>
    <property type="gene ID" value="DDB_G0293484"/>
</dbReference>
<dbReference type="GeneID" id="8629248"/>
<dbReference type="KEGG" id="ddi:DDB_G0293484"/>
<dbReference type="dictyBase" id="DDB_G0293484">
    <property type="gene designation" value="psenen"/>
</dbReference>
<dbReference type="VEuPathDB" id="AmoebaDB:DDB_G0293484"/>
<dbReference type="eggNOG" id="KOG3402">
    <property type="taxonomic scope" value="Eukaryota"/>
</dbReference>
<dbReference type="InParanoid" id="Q54BR1"/>
<dbReference type="PhylomeDB" id="Q54BR1"/>
<dbReference type="PRO" id="PR:Q54BR1"/>
<dbReference type="Proteomes" id="UP000002195">
    <property type="component" value="Chromosome 6"/>
</dbReference>
<dbReference type="GO" id="GO:0005789">
    <property type="term" value="C:endoplasmic reticulum membrane"/>
    <property type="evidence" value="ECO:0007669"/>
    <property type="project" value="UniProtKB-SubCell"/>
</dbReference>
<dbReference type="GO" id="GO:0070765">
    <property type="term" value="C:gamma-secretase complex"/>
    <property type="evidence" value="ECO:0000318"/>
    <property type="project" value="GO_Central"/>
</dbReference>
<dbReference type="GO" id="GO:0032580">
    <property type="term" value="C:Golgi cisterna membrane"/>
    <property type="evidence" value="ECO:0007669"/>
    <property type="project" value="UniProtKB-SubCell"/>
</dbReference>
<dbReference type="GO" id="GO:0007219">
    <property type="term" value="P:Notch signaling pathway"/>
    <property type="evidence" value="ECO:0007669"/>
    <property type="project" value="UniProtKB-KW"/>
</dbReference>
<dbReference type="InterPro" id="IPR019379">
    <property type="entry name" value="Gamma_Secretase_Asp_P_PEN2"/>
</dbReference>
<dbReference type="PANTHER" id="PTHR16318">
    <property type="entry name" value="GAMMA-SECRETASE SUBUNIT PEN-2"/>
    <property type="match status" value="1"/>
</dbReference>
<dbReference type="PANTHER" id="PTHR16318:SF0">
    <property type="entry name" value="GAMMA-SECRETASE SUBUNIT PEN-2"/>
    <property type="match status" value="1"/>
</dbReference>
<dbReference type="Pfam" id="PF10251">
    <property type="entry name" value="PEN-2"/>
    <property type="match status" value="1"/>
</dbReference>
<feature type="chain" id="PRO_0000328268" description="Probable gamma-secretase subunit PEN-2">
    <location>
        <begin position="1"/>
        <end position="97"/>
    </location>
</feature>
<feature type="topological domain" description="Cytoplasmic" evidence="1">
    <location>
        <begin position="1"/>
        <end position="20"/>
    </location>
</feature>
<feature type="intramembrane region" description="Helical" evidence="1">
    <location>
        <begin position="21"/>
        <end position="39"/>
    </location>
</feature>
<feature type="topological domain" description="Cytoplasmic" evidence="1">
    <location>
        <begin position="40"/>
        <end position="55"/>
    </location>
</feature>
<feature type="transmembrane region" description="Helical" evidence="1">
    <location>
        <begin position="56"/>
        <end position="76"/>
    </location>
</feature>
<feature type="topological domain" description="Lumenal" evidence="1">
    <location>
        <begin position="77"/>
        <end position="97"/>
    </location>
</feature>
<feature type="sequence conflict" description="In Ref. 1; EAL60704." evidence="2" ref="1">
    <original>P</original>
    <variation>T</variation>
    <location>
        <position position="30"/>
    </location>
</feature>
<name>PEN2_DICDI</name>
<reference key="1">
    <citation type="journal article" date="2005" name="Nature">
        <title>The genome of the social amoeba Dictyostelium discoideum.</title>
        <authorList>
            <person name="Eichinger L."/>
            <person name="Pachebat J.A."/>
            <person name="Gloeckner G."/>
            <person name="Rajandream M.A."/>
            <person name="Sucgang R."/>
            <person name="Berriman M."/>
            <person name="Song J."/>
            <person name="Olsen R."/>
            <person name="Szafranski K."/>
            <person name="Xu Q."/>
            <person name="Tunggal B."/>
            <person name="Kummerfeld S."/>
            <person name="Madera M."/>
            <person name="Konfortov B.A."/>
            <person name="Rivero F."/>
            <person name="Bankier A.T."/>
            <person name="Lehmann R."/>
            <person name="Hamlin N."/>
            <person name="Davies R."/>
            <person name="Gaudet P."/>
            <person name="Fey P."/>
            <person name="Pilcher K."/>
            <person name="Chen G."/>
            <person name="Saunders D."/>
            <person name="Sodergren E.J."/>
            <person name="Davis P."/>
            <person name="Kerhornou A."/>
            <person name="Nie X."/>
            <person name="Hall N."/>
            <person name="Anjard C."/>
            <person name="Hemphill L."/>
            <person name="Bason N."/>
            <person name="Farbrother P."/>
            <person name="Desany B."/>
            <person name="Just E."/>
            <person name="Morio T."/>
            <person name="Rost R."/>
            <person name="Churcher C.M."/>
            <person name="Cooper J."/>
            <person name="Haydock S."/>
            <person name="van Driessche N."/>
            <person name="Cronin A."/>
            <person name="Goodhead I."/>
            <person name="Muzny D.M."/>
            <person name="Mourier T."/>
            <person name="Pain A."/>
            <person name="Lu M."/>
            <person name="Harper D."/>
            <person name="Lindsay R."/>
            <person name="Hauser H."/>
            <person name="James K.D."/>
            <person name="Quiles M."/>
            <person name="Madan Babu M."/>
            <person name="Saito T."/>
            <person name="Buchrieser C."/>
            <person name="Wardroper A."/>
            <person name="Felder M."/>
            <person name="Thangavelu M."/>
            <person name="Johnson D."/>
            <person name="Knights A."/>
            <person name="Loulseged H."/>
            <person name="Mungall K.L."/>
            <person name="Oliver K."/>
            <person name="Price C."/>
            <person name="Quail M.A."/>
            <person name="Urushihara H."/>
            <person name="Hernandez J."/>
            <person name="Rabbinowitsch E."/>
            <person name="Steffen D."/>
            <person name="Sanders M."/>
            <person name="Ma J."/>
            <person name="Kohara Y."/>
            <person name="Sharp S."/>
            <person name="Simmonds M.N."/>
            <person name="Spiegler S."/>
            <person name="Tivey A."/>
            <person name="Sugano S."/>
            <person name="White B."/>
            <person name="Walker D."/>
            <person name="Woodward J.R."/>
            <person name="Winckler T."/>
            <person name="Tanaka Y."/>
            <person name="Shaulsky G."/>
            <person name="Schleicher M."/>
            <person name="Weinstock G.M."/>
            <person name="Rosenthal A."/>
            <person name="Cox E.C."/>
            <person name="Chisholm R.L."/>
            <person name="Gibbs R.A."/>
            <person name="Loomis W.F."/>
            <person name="Platzer M."/>
            <person name="Kay R.R."/>
            <person name="Williams J.G."/>
            <person name="Dear P.H."/>
            <person name="Noegel A.A."/>
            <person name="Barrell B.G."/>
            <person name="Kuspa A."/>
        </authorList>
    </citation>
    <scope>NUCLEOTIDE SEQUENCE [LARGE SCALE GENOMIC DNA]</scope>
    <source>
        <strain>AX4</strain>
    </source>
</reference>
<reference key="2">
    <citation type="journal article" date="1998" name="DNA Res.">
        <title>The Dictyostelium developmental cDNA project: generation and analysis of expressed sequence tags from the first-finger stage of development.</title>
        <authorList>
            <person name="Morio T."/>
            <person name="Urushihara H."/>
            <person name="Saito T."/>
            <person name="Ugawa Y."/>
            <person name="Mizuno H."/>
            <person name="Yoshida M."/>
            <person name="Yoshino R."/>
            <person name="Mitra B.N."/>
            <person name="Pi M."/>
            <person name="Sato T."/>
            <person name="Takemoto K."/>
            <person name="Yasukawa H."/>
            <person name="Williams J."/>
            <person name="Maeda M."/>
            <person name="Takeuchi I."/>
            <person name="Ochiai H."/>
            <person name="Tanaka Y."/>
        </authorList>
    </citation>
    <scope>NUCLEOTIDE SEQUENCE [LARGE SCALE MRNA]</scope>
</reference>
<evidence type="ECO:0000250" key="1">
    <source>
        <dbReference type="UniProtKB" id="Q9NZ42"/>
    </source>
</evidence>
<evidence type="ECO:0000305" key="2"/>
<keyword id="KW-1003">Cell membrane</keyword>
<keyword id="KW-0256">Endoplasmic reticulum</keyword>
<keyword id="KW-0333">Golgi apparatus</keyword>
<keyword id="KW-0472">Membrane</keyword>
<keyword id="KW-0914">Notch signaling pathway</keyword>
<keyword id="KW-1185">Reference proteome</keyword>
<keyword id="KW-0812">Transmembrane</keyword>
<keyword id="KW-1133">Transmembrane helix</keyword>